<evidence type="ECO:0000255" key="1"/>
<evidence type="ECO:0000255" key="2">
    <source>
        <dbReference type="PROSITE-ProRule" id="PRU00543"/>
    </source>
</evidence>
<evidence type="ECO:0000255" key="3">
    <source>
        <dbReference type="PROSITE-ProRule" id="PRU00544"/>
    </source>
</evidence>
<evidence type="ECO:0000269" key="4">
    <source>
    </source>
</evidence>
<evidence type="ECO:0000303" key="5">
    <source>
    </source>
</evidence>
<evidence type="ECO:0000305" key="6"/>
<evidence type="ECO:0000312" key="7">
    <source>
        <dbReference type="EMBL" id="BAB60160.1"/>
    </source>
</evidence>
<accession>Q979Z2</accession>
<keyword id="KW-0024">Alternative initiation</keyword>
<keyword id="KW-0106">Calcium</keyword>
<keyword id="KW-1003">Cell membrane</keyword>
<keyword id="KW-0407">Ion channel</keyword>
<keyword id="KW-0406">Ion transport</keyword>
<keyword id="KW-0460">Magnesium</keyword>
<keyword id="KW-0464">Manganese</keyword>
<keyword id="KW-0472">Membrane</keyword>
<keyword id="KW-0479">Metal-binding</keyword>
<keyword id="KW-0533">Nickel</keyword>
<keyword id="KW-0630">Potassium</keyword>
<keyword id="KW-0631">Potassium channel</keyword>
<keyword id="KW-0633">Potassium transport</keyword>
<keyword id="KW-0812">Transmembrane</keyword>
<keyword id="KW-1133">Transmembrane helix</keyword>
<keyword id="KW-0813">Transport</keyword>
<protein>
    <recommendedName>
        <fullName evidence="6">Calcium-gated potassium channel TvoK</fullName>
    </recommendedName>
</protein>
<reference key="1">
    <citation type="journal article" date="2000" name="Proc. Natl. Acad. Sci. U.S.A.">
        <title>Archaeal adaptation to higher temperatures revealed by genomic sequence of Thermoplasma volcanium.</title>
        <authorList>
            <person name="Kawashima T."/>
            <person name="Amano N."/>
            <person name="Koike H."/>
            <person name="Makino S."/>
            <person name="Higuchi S."/>
            <person name="Kawashima-Ohya Y."/>
            <person name="Watanabe K."/>
            <person name="Yamazaki M."/>
            <person name="Kanehori K."/>
            <person name="Kawamoto T."/>
            <person name="Nunoshiba T."/>
            <person name="Yamamoto Y."/>
            <person name="Aramaki H."/>
            <person name="Makino K."/>
            <person name="Suzuki M."/>
        </authorList>
    </citation>
    <scope>NUCLEOTIDE SEQUENCE [LARGE SCALE GENOMIC DNA]</scope>
    <source>
        <strain>ATCC 51530 / DSM 4299 / JCM 9571 / NBRC 15438 / GSS1</strain>
    </source>
</reference>
<reference key="2">
    <citation type="journal article" date="2007" name="J. Biol. Chem.">
        <title>Molecular architecture and divalent cation activation of TvoK, a prokaryotic potassium channel.</title>
        <authorList>
            <person name="Parfenova L.V."/>
            <person name="Abarca-Heidemann K."/>
            <person name="Crane B.M."/>
            <person name="Rothberg B.S."/>
        </authorList>
    </citation>
    <scope>FUNCTION</scope>
    <scope>SUBUNIT</scope>
    <scope>ALTERNATIVE INITIATION</scope>
    <scope>MUTAGENESIS OF ARG-111; LYS-114; LEU-115 AND LYS-117</scope>
</reference>
<organism>
    <name type="scientific">Thermoplasma volcanium (strain ATCC 51530 / DSM 4299 / JCM 9571 / NBRC 15438 / GSS1)</name>
    <dbReference type="NCBI Taxonomy" id="273116"/>
    <lineage>
        <taxon>Archaea</taxon>
        <taxon>Methanobacteriati</taxon>
        <taxon>Thermoplasmatota</taxon>
        <taxon>Thermoplasmata</taxon>
        <taxon>Thermoplasmatales</taxon>
        <taxon>Thermoplasmataceae</taxon>
        <taxon>Thermoplasma</taxon>
    </lineage>
</organism>
<proteinExistence type="evidence at protein level"/>
<dbReference type="EMBL" id="BA000011">
    <property type="protein sequence ID" value="BAB60160.1"/>
    <property type="molecule type" value="Genomic_DNA"/>
</dbReference>
<dbReference type="RefSeq" id="WP_010917246.1">
    <molecule id="Q979Z2-1"/>
    <property type="nucleotide sequence ID" value="NC_002689.2"/>
</dbReference>
<dbReference type="SMR" id="Q979Z2"/>
<dbReference type="STRING" id="273116.gene:9381811"/>
<dbReference type="TCDB" id="1.A.1.13.3">
    <property type="family name" value="the voltage-gated ion channel (vic) superfamily"/>
</dbReference>
<dbReference type="PaxDb" id="273116-14325256"/>
<dbReference type="GeneID" id="1441128"/>
<dbReference type="KEGG" id="tvo:TVG1041141"/>
<dbReference type="eggNOG" id="arCOG01958">
    <property type="taxonomic scope" value="Archaea"/>
</dbReference>
<dbReference type="HOGENOM" id="CLU_050982_1_1_2"/>
<dbReference type="OrthoDB" id="43518at2157"/>
<dbReference type="PhylomeDB" id="Q979Z2"/>
<dbReference type="Proteomes" id="UP000001017">
    <property type="component" value="Chromosome"/>
</dbReference>
<dbReference type="GO" id="GO:0005886">
    <property type="term" value="C:plasma membrane"/>
    <property type="evidence" value="ECO:0007669"/>
    <property type="project" value="UniProtKB-SubCell"/>
</dbReference>
<dbReference type="GO" id="GO:0046872">
    <property type="term" value="F:metal ion binding"/>
    <property type="evidence" value="ECO:0007669"/>
    <property type="project" value="UniProtKB-KW"/>
</dbReference>
<dbReference type="GO" id="GO:0005267">
    <property type="term" value="F:potassium channel activity"/>
    <property type="evidence" value="ECO:0007669"/>
    <property type="project" value="UniProtKB-KW"/>
</dbReference>
<dbReference type="Gene3D" id="1.10.287.70">
    <property type="match status" value="1"/>
</dbReference>
<dbReference type="Gene3D" id="3.40.50.720">
    <property type="entry name" value="NAD(P)-binding Rossmann-like Domain"/>
    <property type="match status" value="1"/>
</dbReference>
<dbReference type="InterPro" id="IPR003280">
    <property type="entry name" value="2pore_dom_K_chnl"/>
</dbReference>
<dbReference type="InterPro" id="IPR013099">
    <property type="entry name" value="K_chnl_dom"/>
</dbReference>
<dbReference type="InterPro" id="IPR036291">
    <property type="entry name" value="NAD(P)-bd_dom_sf"/>
</dbReference>
<dbReference type="InterPro" id="IPR003148">
    <property type="entry name" value="RCK_N"/>
</dbReference>
<dbReference type="InterPro" id="IPR050721">
    <property type="entry name" value="Trk_Ktr_HKT_K-transport"/>
</dbReference>
<dbReference type="PANTHER" id="PTHR43833">
    <property type="entry name" value="POTASSIUM CHANNEL PROTEIN 2-RELATED-RELATED"/>
    <property type="match status" value="1"/>
</dbReference>
<dbReference type="PANTHER" id="PTHR43833:SF9">
    <property type="entry name" value="POTASSIUM CHANNEL PROTEIN YUGO-RELATED"/>
    <property type="match status" value="1"/>
</dbReference>
<dbReference type="Pfam" id="PF07885">
    <property type="entry name" value="Ion_trans_2"/>
    <property type="match status" value="1"/>
</dbReference>
<dbReference type="Pfam" id="PF22614">
    <property type="entry name" value="Slo-like_RCK"/>
    <property type="match status" value="1"/>
</dbReference>
<dbReference type="PRINTS" id="PR01333">
    <property type="entry name" value="2POREKCHANEL"/>
</dbReference>
<dbReference type="SUPFAM" id="SSF51735">
    <property type="entry name" value="NAD(P)-binding Rossmann-fold domains"/>
    <property type="match status" value="1"/>
</dbReference>
<dbReference type="SUPFAM" id="SSF81324">
    <property type="entry name" value="Voltage-gated potassium channels"/>
    <property type="match status" value="1"/>
</dbReference>
<dbReference type="PROSITE" id="PS51202">
    <property type="entry name" value="RCK_C"/>
    <property type="match status" value="1"/>
</dbReference>
<dbReference type="PROSITE" id="PS51201">
    <property type="entry name" value="RCK_N"/>
    <property type="match status" value="1"/>
</dbReference>
<name>TVOK_THEVO</name>
<gene>
    <name evidence="5" type="primary">tvoK</name>
    <name evidence="6" type="ordered locus">TV1018</name>
    <name evidence="7" type="ORF">TVG1041141</name>
</gene>
<comment type="function">
    <text evidence="4">Calcium-gated potassium channel. Can also be activated by Mg(2+), Mn(2+) and Ni(2+).</text>
</comment>
<comment type="subunit">
    <text evidence="4">Heterooctamer composed of four full-length subunits and four soluble RCK domains.</text>
</comment>
<comment type="subcellular location">
    <subcellularLocation>
        <location evidence="6">Cell membrane</location>
        <topology evidence="1">Multi-pass membrane protein</topology>
    </subcellularLocation>
</comment>
<comment type="alternative products">
    <event type="alternative initiation"/>
    <isoform>
        <id>Q979Z2-1</id>
        <name evidence="6">1</name>
        <name evidence="6">Calcium-gated potassium channel</name>
        <sequence type="displayed"/>
    </isoform>
    <isoform>
        <id>Q979Z2-2</id>
        <name evidence="6">2</name>
        <name evidence="6">Soluble RCK domain</name>
        <sequence type="described" ref="VSP_059160 VSP_059161"/>
    </isoform>
</comment>
<comment type="miscellaneous">
    <molecule>Isoform 2</molecule>
    <text evidence="4">Starts at UUG codon.</text>
</comment>
<sequence length="348" mass="38605">MRPFRTLVKVLQKIESSPLTKVFMAFIIVVLIGSYLEFLTQRNVKYSEIKNYFTAIWFTMETVTTVGYGDVVPVSNLGRVVAMLIMVSGIGLLGTLTATISAYLFQIRIERRGKLEKRLKNHTIICNWNAYTRNIIEGNRDEEAAPIVILSENTDNSEKYQNVFFVKGDCTSEDDLKNAAIEDAARVVIMSDIENNAIPEDLLDAKTLLSIFTVRKLNNAVEIIAEVRDEKNKKHAVSAGATEVLSVGELSSRLISRSISNPGLTDFILKSLSETEDFKIFSIEACGILPGMTVKDAASNLAEVCVIISVISKGKIEYPPDRSYKIGAGDYVVFLAKNKKEVEEAIKG</sequence>
<feature type="chain" id="PRO_0000439237" description="Calcium-gated potassium channel TvoK">
    <location>
        <begin position="1"/>
        <end position="348"/>
    </location>
</feature>
<feature type="transmembrane region" description="Helical" evidence="1">
    <location>
        <begin position="19"/>
        <end position="39"/>
    </location>
</feature>
<feature type="transmembrane region" description="Helical" evidence="1">
    <location>
        <begin position="52"/>
        <end position="72"/>
    </location>
</feature>
<feature type="transmembrane region" description="Helical" evidence="1">
    <location>
        <begin position="80"/>
        <end position="100"/>
    </location>
</feature>
<feature type="domain" description="RCK N-terminal" evidence="2">
    <location>
        <begin position="120"/>
        <end position="246"/>
    </location>
</feature>
<feature type="domain" description="RCK C-terminal" evidence="3">
    <location>
        <begin position="266"/>
        <end position="348"/>
    </location>
</feature>
<feature type="splice variant" id="VSP_059160" description="In isoform 2." evidence="4">
    <location>
        <begin position="1"/>
        <end position="114"/>
    </location>
</feature>
<feature type="splice variant" id="VSP_059161" description="In isoform 2.">
    <original>L</original>
    <variation>M</variation>
    <location>
        <position position="115"/>
    </location>
</feature>
<feature type="mutagenesis site" description="Reduces levels of the soluble RCK domain." evidence="4">
    <original>R</original>
    <variation>N</variation>
    <location>
        <position position="111"/>
    </location>
</feature>
<feature type="mutagenesis site" description="Does not affect levels of the soluble RCK domain." evidence="4">
    <original>K</original>
    <variation>N</variation>
    <location>
        <position position="114"/>
    </location>
</feature>
<feature type="mutagenesis site" description="Abolishes expression of the soluble RCK domain." evidence="4">
    <original>L</original>
    <variation>N</variation>
    <location>
        <position position="115"/>
    </location>
</feature>
<feature type="mutagenesis site" description="Does not affect levels of the soluble RCK domain." evidence="4">
    <original>K</original>
    <variation>N</variation>
    <location>
        <position position="117"/>
    </location>
</feature>